<organism>
    <name type="scientific">Buchnera aphidicola subsp. Cinara cedri (strain Cc)</name>
    <dbReference type="NCBI Taxonomy" id="372461"/>
    <lineage>
        <taxon>Bacteria</taxon>
        <taxon>Pseudomonadati</taxon>
        <taxon>Pseudomonadota</taxon>
        <taxon>Gammaproteobacteria</taxon>
        <taxon>Enterobacterales</taxon>
        <taxon>Erwiniaceae</taxon>
        <taxon>Buchnera</taxon>
    </lineage>
</organism>
<name>AROB_BUCCC</name>
<feature type="chain" id="PRO_1000094467" description="3-dehydroquinate synthase">
    <location>
        <begin position="1"/>
        <end position="367"/>
    </location>
</feature>
<feature type="binding site" evidence="1">
    <location>
        <begin position="72"/>
        <end position="77"/>
    </location>
    <ligand>
        <name>NAD(+)</name>
        <dbReference type="ChEBI" id="CHEBI:57540"/>
    </ligand>
</feature>
<feature type="binding site" evidence="1">
    <location>
        <begin position="106"/>
        <end position="110"/>
    </location>
    <ligand>
        <name>NAD(+)</name>
        <dbReference type="ChEBI" id="CHEBI:57540"/>
    </ligand>
</feature>
<feature type="binding site" evidence="1">
    <location>
        <begin position="130"/>
        <end position="131"/>
    </location>
    <ligand>
        <name>NAD(+)</name>
        <dbReference type="ChEBI" id="CHEBI:57540"/>
    </ligand>
</feature>
<feature type="binding site" evidence="1">
    <location>
        <position position="143"/>
    </location>
    <ligand>
        <name>NAD(+)</name>
        <dbReference type="ChEBI" id="CHEBI:57540"/>
    </ligand>
</feature>
<feature type="binding site" evidence="1">
    <location>
        <position position="152"/>
    </location>
    <ligand>
        <name>NAD(+)</name>
        <dbReference type="ChEBI" id="CHEBI:57540"/>
    </ligand>
</feature>
<feature type="binding site" evidence="1">
    <location>
        <begin position="170"/>
        <end position="173"/>
    </location>
    <ligand>
        <name>NAD(+)</name>
        <dbReference type="ChEBI" id="CHEBI:57540"/>
    </ligand>
</feature>
<feature type="binding site" evidence="1">
    <location>
        <position position="185"/>
    </location>
    <ligand>
        <name>Zn(2+)</name>
        <dbReference type="ChEBI" id="CHEBI:29105"/>
    </ligand>
</feature>
<feature type="binding site" evidence="1">
    <location>
        <position position="248"/>
    </location>
    <ligand>
        <name>Zn(2+)</name>
        <dbReference type="ChEBI" id="CHEBI:29105"/>
    </ligand>
</feature>
<feature type="binding site" evidence="1">
    <location>
        <position position="265"/>
    </location>
    <ligand>
        <name>Zn(2+)</name>
        <dbReference type="ChEBI" id="CHEBI:29105"/>
    </ligand>
</feature>
<keyword id="KW-0028">Amino-acid biosynthesis</keyword>
<keyword id="KW-0057">Aromatic amino acid biosynthesis</keyword>
<keyword id="KW-0170">Cobalt</keyword>
<keyword id="KW-0963">Cytoplasm</keyword>
<keyword id="KW-0456">Lyase</keyword>
<keyword id="KW-0479">Metal-binding</keyword>
<keyword id="KW-0520">NAD</keyword>
<keyword id="KW-0547">Nucleotide-binding</keyword>
<keyword id="KW-1185">Reference proteome</keyword>
<keyword id="KW-0862">Zinc</keyword>
<evidence type="ECO:0000255" key="1">
    <source>
        <dbReference type="HAMAP-Rule" id="MF_00110"/>
    </source>
</evidence>
<reference key="1">
    <citation type="journal article" date="2006" name="Science">
        <title>A small microbial genome: the end of a long symbiotic relationship?</title>
        <authorList>
            <person name="Perez-Brocal V."/>
            <person name="Gil R."/>
            <person name="Ramos S."/>
            <person name="Lamelas A."/>
            <person name="Postigo M."/>
            <person name="Michelena J.M."/>
            <person name="Silva F.J."/>
            <person name="Moya A."/>
            <person name="Latorre A."/>
        </authorList>
    </citation>
    <scope>NUCLEOTIDE SEQUENCE [LARGE SCALE GENOMIC DNA]</scope>
    <source>
        <strain>Cc</strain>
    </source>
</reference>
<protein>
    <recommendedName>
        <fullName evidence="1">3-dehydroquinate synthase</fullName>
        <shortName evidence="1">DHQS</shortName>
        <ecNumber evidence="1">4.2.3.4</ecNumber>
    </recommendedName>
</protein>
<sequence>MIETIHVNLNNYSYNIYIGEYIFNNMFISSIFLKNKNNVLITNKKIEKKILKNKNQYFYKILNKIHYFSINDGENYKNLYEVEKIISFLLNNLYGRDLNLIALGGGVIGDITGFVASIFQRGVNFFQIPTTLLSQVDASIGGKTGVNHILGKNMIGSFWQPKGVFIDIKFLSTLPKKELLSGIAEIIKYAIVFDKIFFIWLENNLFKVLNLQKKELLYCIKKCCELKVKIIENDEKEIGNRVFLNLGHSFAHAIETFTGYGKWLHGNAVSVGIIMSSYLSFYLKYLKKSELLNIINIFNNIGLPIIGPSTMLPLDYLKLMMRDKKVINKNLRLVIPVSIGKVKLISSIKENILLDSITACQERRFFS</sequence>
<gene>
    <name evidence="1" type="primary">aroB</name>
    <name type="ordered locus">BCc_352</name>
</gene>
<dbReference type="EC" id="4.2.3.4" evidence="1"/>
<dbReference type="EMBL" id="CP000263">
    <property type="protein sequence ID" value="ABJ90806.1"/>
    <property type="molecule type" value="Genomic_DNA"/>
</dbReference>
<dbReference type="RefSeq" id="WP_011672725.1">
    <property type="nucleotide sequence ID" value="NC_008513.1"/>
</dbReference>
<dbReference type="SMR" id="Q056Z3"/>
<dbReference type="STRING" id="372461.BCc_352"/>
<dbReference type="KEGG" id="bcc:BCc_352"/>
<dbReference type="eggNOG" id="COG0337">
    <property type="taxonomic scope" value="Bacteria"/>
</dbReference>
<dbReference type="HOGENOM" id="CLU_001201_0_2_6"/>
<dbReference type="OrthoDB" id="9806583at2"/>
<dbReference type="UniPathway" id="UPA00053">
    <property type="reaction ID" value="UER00085"/>
</dbReference>
<dbReference type="Proteomes" id="UP000000669">
    <property type="component" value="Chromosome"/>
</dbReference>
<dbReference type="GO" id="GO:0005737">
    <property type="term" value="C:cytoplasm"/>
    <property type="evidence" value="ECO:0007669"/>
    <property type="project" value="UniProtKB-SubCell"/>
</dbReference>
<dbReference type="GO" id="GO:0003856">
    <property type="term" value="F:3-dehydroquinate synthase activity"/>
    <property type="evidence" value="ECO:0007669"/>
    <property type="project" value="UniProtKB-UniRule"/>
</dbReference>
<dbReference type="GO" id="GO:0046872">
    <property type="term" value="F:metal ion binding"/>
    <property type="evidence" value="ECO:0007669"/>
    <property type="project" value="UniProtKB-KW"/>
</dbReference>
<dbReference type="GO" id="GO:0000166">
    <property type="term" value="F:nucleotide binding"/>
    <property type="evidence" value="ECO:0007669"/>
    <property type="project" value="UniProtKB-KW"/>
</dbReference>
<dbReference type="GO" id="GO:0008652">
    <property type="term" value="P:amino acid biosynthetic process"/>
    <property type="evidence" value="ECO:0007669"/>
    <property type="project" value="UniProtKB-KW"/>
</dbReference>
<dbReference type="GO" id="GO:0009073">
    <property type="term" value="P:aromatic amino acid family biosynthetic process"/>
    <property type="evidence" value="ECO:0007669"/>
    <property type="project" value="UniProtKB-KW"/>
</dbReference>
<dbReference type="GO" id="GO:0009423">
    <property type="term" value="P:chorismate biosynthetic process"/>
    <property type="evidence" value="ECO:0007669"/>
    <property type="project" value="UniProtKB-UniRule"/>
</dbReference>
<dbReference type="CDD" id="cd08195">
    <property type="entry name" value="DHQS"/>
    <property type="match status" value="1"/>
</dbReference>
<dbReference type="FunFam" id="3.40.50.1970:FF:000007">
    <property type="entry name" value="Pentafunctional AROM polypeptide"/>
    <property type="match status" value="1"/>
</dbReference>
<dbReference type="Gene3D" id="3.40.50.1970">
    <property type="match status" value="1"/>
</dbReference>
<dbReference type="Gene3D" id="1.20.1090.10">
    <property type="entry name" value="Dehydroquinate synthase-like - alpha domain"/>
    <property type="match status" value="1"/>
</dbReference>
<dbReference type="HAMAP" id="MF_00110">
    <property type="entry name" value="DHQ_synthase"/>
    <property type="match status" value="1"/>
</dbReference>
<dbReference type="InterPro" id="IPR050071">
    <property type="entry name" value="Dehydroquinate_synthase"/>
</dbReference>
<dbReference type="InterPro" id="IPR016037">
    <property type="entry name" value="DHQ_synth_AroB"/>
</dbReference>
<dbReference type="InterPro" id="IPR030963">
    <property type="entry name" value="DHQ_synth_fam"/>
</dbReference>
<dbReference type="InterPro" id="IPR030960">
    <property type="entry name" value="DHQS/DOIS_N"/>
</dbReference>
<dbReference type="InterPro" id="IPR056179">
    <property type="entry name" value="DHQS_C"/>
</dbReference>
<dbReference type="NCBIfam" id="TIGR01357">
    <property type="entry name" value="aroB"/>
    <property type="match status" value="1"/>
</dbReference>
<dbReference type="PANTHER" id="PTHR43622">
    <property type="entry name" value="3-DEHYDROQUINATE SYNTHASE"/>
    <property type="match status" value="1"/>
</dbReference>
<dbReference type="PANTHER" id="PTHR43622:SF7">
    <property type="entry name" value="3-DEHYDROQUINATE SYNTHASE, CHLOROPLASTIC"/>
    <property type="match status" value="1"/>
</dbReference>
<dbReference type="Pfam" id="PF01761">
    <property type="entry name" value="DHQ_synthase"/>
    <property type="match status" value="1"/>
</dbReference>
<dbReference type="Pfam" id="PF24621">
    <property type="entry name" value="DHQS_C"/>
    <property type="match status" value="1"/>
</dbReference>
<dbReference type="PIRSF" id="PIRSF001455">
    <property type="entry name" value="DHQ_synth"/>
    <property type="match status" value="1"/>
</dbReference>
<dbReference type="SUPFAM" id="SSF56796">
    <property type="entry name" value="Dehydroquinate synthase-like"/>
    <property type="match status" value="1"/>
</dbReference>
<accession>Q056Z3</accession>
<proteinExistence type="inferred from homology"/>
<comment type="function">
    <text evidence="1">Catalyzes the conversion of 3-deoxy-D-arabino-heptulosonate 7-phosphate (DAHP) to dehydroquinate (DHQ).</text>
</comment>
<comment type="catalytic activity">
    <reaction evidence="1">
        <text>7-phospho-2-dehydro-3-deoxy-D-arabino-heptonate = 3-dehydroquinate + phosphate</text>
        <dbReference type="Rhea" id="RHEA:21968"/>
        <dbReference type="ChEBI" id="CHEBI:32364"/>
        <dbReference type="ChEBI" id="CHEBI:43474"/>
        <dbReference type="ChEBI" id="CHEBI:58394"/>
        <dbReference type="EC" id="4.2.3.4"/>
    </reaction>
</comment>
<comment type="cofactor">
    <cofactor evidence="1">
        <name>Co(2+)</name>
        <dbReference type="ChEBI" id="CHEBI:48828"/>
    </cofactor>
    <cofactor evidence="1">
        <name>Zn(2+)</name>
        <dbReference type="ChEBI" id="CHEBI:29105"/>
    </cofactor>
    <text evidence="1">Binds 1 divalent metal cation per subunit. Can use either Co(2+) or Zn(2+).</text>
</comment>
<comment type="cofactor">
    <cofactor evidence="1">
        <name>NAD(+)</name>
        <dbReference type="ChEBI" id="CHEBI:57540"/>
    </cofactor>
</comment>
<comment type="pathway">
    <text evidence="1">Metabolic intermediate biosynthesis; chorismate biosynthesis; chorismate from D-erythrose 4-phosphate and phosphoenolpyruvate: step 2/7.</text>
</comment>
<comment type="subcellular location">
    <subcellularLocation>
        <location evidence="1">Cytoplasm</location>
    </subcellularLocation>
</comment>
<comment type="similarity">
    <text evidence="1">Belongs to the sugar phosphate cyclases superfamily. Dehydroquinate synthase family.</text>
</comment>